<reference key="1">
    <citation type="journal article" date="1989" name="Microb. Pathog.">
        <title>The nucleotide sequence of the first two genes of the CFA/I fimbrial operon of human enterotoxigenic Escherichia coli.</title>
        <authorList>
            <person name="Hamers A.M."/>
            <person name="Pel H.J."/>
            <person name="Willshaw G.A."/>
            <person name="Kusters J.G."/>
            <person name="van der Zeijst B.A.M."/>
            <person name="Gaastra W."/>
        </authorList>
    </citation>
    <scope>NUCLEOTIDE SEQUENCE [GENOMIC DNA]</scope>
    <source>
        <strain>E7473/0 / ETEC</strain>
    </source>
</reference>
<reference key="2">
    <citation type="journal article" date="1992" name="DNA Seq.">
        <title>The complete nucleotide sequence of region 1 of the CFA/I fimbrial operon of human enterotoxigenic Escherichia coli.</title>
        <authorList>
            <person name="Jordi B.J.A.M."/>
            <person name="Willshaw G.A."/>
            <person name="van der Zeijst B.A.M."/>
            <person name="Gaastra W."/>
        </authorList>
    </citation>
    <scope>NUCLEOTIDE SEQUENCE [GENOMIC DNA]</scope>
</reference>
<sequence>MHKLFYLLSLLMAPFVANANFMIYPISKDLKNGNSELVRVYSKSKEIQYIKIYTKKIINPGTTEEYKVDIPNWDGGLVVTPQKVILPAGASKSIRLTQFKIPKKEEVYRVYFEAVKPDSKENVIDNKKLTTELSVNIIYAALIRSLPSEQNISLNISRNAKKNIIIYNNGNVRAGVKDIYFCKSSNIDDNCVKKAYNKNIYPEKSFDTLVNNNFSYVFIKLNHEGIEKEQGLIQLKVP</sequence>
<organism>
    <name type="scientific">Escherichia coli</name>
    <dbReference type="NCBI Taxonomy" id="562"/>
    <lineage>
        <taxon>Bacteria</taxon>
        <taxon>Pseudomonadati</taxon>
        <taxon>Pseudomonadota</taxon>
        <taxon>Gammaproteobacteria</taxon>
        <taxon>Enterobacterales</taxon>
        <taxon>Enterobacteriaceae</taxon>
        <taxon>Escherichia</taxon>
    </lineage>
</organism>
<gene>
    <name type="primary">cfaA</name>
</gene>
<evidence type="ECO:0000255" key="1"/>
<evidence type="ECO:0000305" key="2"/>
<protein>
    <recommendedName>
        <fullName>CFA/I fimbrial subunit A</fullName>
    </recommendedName>
    <alternativeName>
        <fullName>Colonization factor antigen I subunit A</fullName>
    </alternativeName>
</protein>
<dbReference type="EMBL" id="M55661">
    <property type="protein sequence ID" value="AAC41414.1"/>
    <property type="molecule type" value="Genomic_DNA"/>
</dbReference>
<dbReference type="PIR" id="A56617">
    <property type="entry name" value="A56617"/>
</dbReference>
<dbReference type="SMR" id="P25732"/>
<dbReference type="GO" id="GO:0009289">
    <property type="term" value="C:pilus"/>
    <property type="evidence" value="ECO:0007669"/>
    <property type="project" value="UniProtKB-SubCell"/>
</dbReference>
<dbReference type="Gene3D" id="2.60.40.3970">
    <property type="match status" value="1"/>
</dbReference>
<dbReference type="Gene3D" id="2.60.40.10">
    <property type="entry name" value="Immunoglobulins"/>
    <property type="match status" value="1"/>
</dbReference>
<dbReference type="InterPro" id="IPR013783">
    <property type="entry name" value="Ig-like_fold"/>
</dbReference>
<proteinExistence type="inferred from homology"/>
<comment type="function">
    <text>Might function as a shuttle protein in the transport of fimbria through the periplasmic space or might function as an adhesin.</text>
</comment>
<comment type="subcellular location">
    <subcellularLocation>
        <location evidence="2">Fimbrium</location>
    </subcellularLocation>
</comment>
<feature type="signal peptide" evidence="1">
    <location>
        <begin position="1"/>
        <end position="19"/>
    </location>
</feature>
<feature type="chain" id="PRO_0000009247" description="CFA/I fimbrial subunit A">
    <location>
        <begin position="20"/>
        <end position="238"/>
    </location>
</feature>
<geneLocation type="plasmid">
    <name>NTP513</name>
</geneLocation>
<keyword id="KW-0281">Fimbrium</keyword>
<keyword id="KW-0614">Plasmid</keyword>
<keyword id="KW-0732">Signal</keyword>
<accession>P25732</accession>
<name>CFAA_ECOLX</name>